<organism>
    <name type="scientific">Anaplasma phagocytophilum (strain HZ)</name>
    <dbReference type="NCBI Taxonomy" id="212042"/>
    <lineage>
        <taxon>Bacteria</taxon>
        <taxon>Pseudomonadati</taxon>
        <taxon>Pseudomonadota</taxon>
        <taxon>Alphaproteobacteria</taxon>
        <taxon>Rickettsiales</taxon>
        <taxon>Anaplasmataceae</taxon>
        <taxon>Anaplasma</taxon>
        <taxon>phagocytophilum group</taxon>
    </lineage>
</organism>
<comment type="function">
    <text evidence="1">Involved in peptide bond synthesis. Stimulates efficient translation and peptide-bond synthesis on native or reconstituted 70S ribosomes in vitro. Probably functions indirectly by altering the affinity of the ribosome for aminoacyl-tRNA, thus increasing their reactivity as acceptors for peptidyl transferase.</text>
</comment>
<comment type="pathway">
    <text evidence="1">Protein biosynthesis; polypeptide chain elongation.</text>
</comment>
<comment type="subcellular location">
    <subcellularLocation>
        <location evidence="1">Cytoplasm</location>
    </subcellularLocation>
</comment>
<comment type="similarity">
    <text evidence="1">Belongs to the elongation factor P family.</text>
</comment>
<reference key="1">
    <citation type="journal article" date="2006" name="PLoS Genet.">
        <title>Comparative genomics of emerging human ehrlichiosis agents.</title>
        <authorList>
            <person name="Dunning Hotopp J.C."/>
            <person name="Lin M."/>
            <person name="Madupu R."/>
            <person name="Crabtree J."/>
            <person name="Angiuoli S.V."/>
            <person name="Eisen J.A."/>
            <person name="Seshadri R."/>
            <person name="Ren Q."/>
            <person name="Wu M."/>
            <person name="Utterback T.R."/>
            <person name="Smith S."/>
            <person name="Lewis M."/>
            <person name="Khouri H."/>
            <person name="Zhang C."/>
            <person name="Niu H."/>
            <person name="Lin Q."/>
            <person name="Ohashi N."/>
            <person name="Zhi N."/>
            <person name="Nelson W.C."/>
            <person name="Brinkac L.M."/>
            <person name="Dodson R.J."/>
            <person name="Rosovitz M.J."/>
            <person name="Sundaram J.P."/>
            <person name="Daugherty S.C."/>
            <person name="Davidsen T."/>
            <person name="Durkin A.S."/>
            <person name="Gwinn M.L."/>
            <person name="Haft D.H."/>
            <person name="Selengut J.D."/>
            <person name="Sullivan S.A."/>
            <person name="Zafar N."/>
            <person name="Zhou L."/>
            <person name="Benahmed F."/>
            <person name="Forberger H."/>
            <person name="Halpin R."/>
            <person name="Mulligan S."/>
            <person name="Robinson J."/>
            <person name="White O."/>
            <person name="Rikihisa Y."/>
            <person name="Tettelin H."/>
        </authorList>
    </citation>
    <scope>NUCLEOTIDE SEQUENCE [LARGE SCALE GENOMIC DNA]</scope>
    <source>
        <strain>HZ</strain>
    </source>
</reference>
<protein>
    <recommendedName>
        <fullName evidence="1">Elongation factor P</fullName>
        <shortName evidence="1">EF-P</shortName>
    </recommendedName>
</protein>
<gene>
    <name evidence="1" type="primary">efp</name>
    <name type="ordered locus">APH_0547</name>
</gene>
<sequence length="188" mass="21028">MAERGNDIRPGQVLDHNGALYLVVKTMHTQPGKGGAYIQAELKNLKTGAKYQERFRADGYVNRAIIEEVSFQYIFGDSSSLTLMNTENYEQISIPVELLGDKSVYLQENMILTLLFHKGQVISAKVPDYVVLEVVEAESVIKGQTASSSYKSAVLENGRRVSVPPFIKVGEKIVIYTPDDTYYERAKD</sequence>
<keyword id="KW-0963">Cytoplasm</keyword>
<keyword id="KW-0251">Elongation factor</keyword>
<keyword id="KW-0648">Protein biosynthesis</keyword>
<name>EFP_ANAPZ</name>
<dbReference type="EMBL" id="CP000235">
    <property type="protein sequence ID" value="ABD44450.1"/>
    <property type="molecule type" value="Genomic_DNA"/>
</dbReference>
<dbReference type="RefSeq" id="WP_011450660.1">
    <property type="nucleotide sequence ID" value="NC_007797.1"/>
</dbReference>
<dbReference type="SMR" id="Q2GKG2"/>
<dbReference type="STRING" id="212042.APH_0547"/>
<dbReference type="PaxDb" id="212042-APH_0547"/>
<dbReference type="EnsemblBacteria" id="ABD44450">
    <property type="protein sequence ID" value="ABD44450"/>
    <property type="gene ID" value="APH_0547"/>
</dbReference>
<dbReference type="GeneID" id="92748327"/>
<dbReference type="KEGG" id="aph:APH_0547"/>
<dbReference type="eggNOG" id="COG0231">
    <property type="taxonomic scope" value="Bacteria"/>
</dbReference>
<dbReference type="HOGENOM" id="CLU_074944_1_1_5"/>
<dbReference type="UniPathway" id="UPA00345"/>
<dbReference type="Proteomes" id="UP000001943">
    <property type="component" value="Chromosome"/>
</dbReference>
<dbReference type="GO" id="GO:0005737">
    <property type="term" value="C:cytoplasm"/>
    <property type="evidence" value="ECO:0007669"/>
    <property type="project" value="UniProtKB-SubCell"/>
</dbReference>
<dbReference type="GO" id="GO:0003746">
    <property type="term" value="F:translation elongation factor activity"/>
    <property type="evidence" value="ECO:0007669"/>
    <property type="project" value="UniProtKB-UniRule"/>
</dbReference>
<dbReference type="GO" id="GO:0043043">
    <property type="term" value="P:peptide biosynthetic process"/>
    <property type="evidence" value="ECO:0007669"/>
    <property type="project" value="InterPro"/>
</dbReference>
<dbReference type="CDD" id="cd04470">
    <property type="entry name" value="S1_EF-P_repeat_1"/>
    <property type="match status" value="1"/>
</dbReference>
<dbReference type="CDD" id="cd05794">
    <property type="entry name" value="S1_EF-P_repeat_2"/>
    <property type="match status" value="1"/>
</dbReference>
<dbReference type="FunFam" id="2.30.30.30:FF:000003">
    <property type="entry name" value="Elongation factor P"/>
    <property type="match status" value="1"/>
</dbReference>
<dbReference type="FunFam" id="2.40.50.140:FF:000004">
    <property type="entry name" value="Elongation factor P"/>
    <property type="match status" value="1"/>
</dbReference>
<dbReference type="Gene3D" id="2.30.30.30">
    <property type="match status" value="1"/>
</dbReference>
<dbReference type="Gene3D" id="2.40.50.140">
    <property type="entry name" value="Nucleic acid-binding proteins"/>
    <property type="match status" value="2"/>
</dbReference>
<dbReference type="HAMAP" id="MF_00141">
    <property type="entry name" value="EF_P"/>
    <property type="match status" value="1"/>
</dbReference>
<dbReference type="InterPro" id="IPR015365">
    <property type="entry name" value="Elong-fact-P_C"/>
</dbReference>
<dbReference type="InterPro" id="IPR012340">
    <property type="entry name" value="NA-bd_OB-fold"/>
</dbReference>
<dbReference type="InterPro" id="IPR014722">
    <property type="entry name" value="Rib_uL2_dom2"/>
</dbReference>
<dbReference type="InterPro" id="IPR020599">
    <property type="entry name" value="Transl_elong_fac_P/YeiP"/>
</dbReference>
<dbReference type="InterPro" id="IPR013185">
    <property type="entry name" value="Transl_elong_KOW-like"/>
</dbReference>
<dbReference type="InterPro" id="IPR001059">
    <property type="entry name" value="Transl_elong_P/YeiP_cen"/>
</dbReference>
<dbReference type="InterPro" id="IPR013852">
    <property type="entry name" value="Transl_elong_P/YeiP_CS"/>
</dbReference>
<dbReference type="InterPro" id="IPR011768">
    <property type="entry name" value="Transl_elongation_fac_P"/>
</dbReference>
<dbReference type="InterPro" id="IPR008991">
    <property type="entry name" value="Translation_prot_SH3-like_sf"/>
</dbReference>
<dbReference type="NCBIfam" id="TIGR00038">
    <property type="entry name" value="efp"/>
    <property type="match status" value="1"/>
</dbReference>
<dbReference type="NCBIfam" id="NF001810">
    <property type="entry name" value="PRK00529.1"/>
    <property type="match status" value="1"/>
</dbReference>
<dbReference type="PANTHER" id="PTHR30053">
    <property type="entry name" value="ELONGATION FACTOR P"/>
    <property type="match status" value="1"/>
</dbReference>
<dbReference type="PANTHER" id="PTHR30053:SF14">
    <property type="entry name" value="TRANSLATION ELONGATION FACTOR KOW-LIKE DOMAIN-CONTAINING PROTEIN"/>
    <property type="match status" value="1"/>
</dbReference>
<dbReference type="Pfam" id="PF01132">
    <property type="entry name" value="EFP"/>
    <property type="match status" value="1"/>
</dbReference>
<dbReference type="Pfam" id="PF08207">
    <property type="entry name" value="EFP_N"/>
    <property type="match status" value="1"/>
</dbReference>
<dbReference type="Pfam" id="PF09285">
    <property type="entry name" value="Elong-fact-P_C"/>
    <property type="match status" value="1"/>
</dbReference>
<dbReference type="PIRSF" id="PIRSF005901">
    <property type="entry name" value="EF-P"/>
    <property type="match status" value="1"/>
</dbReference>
<dbReference type="SMART" id="SM01185">
    <property type="entry name" value="EFP"/>
    <property type="match status" value="1"/>
</dbReference>
<dbReference type="SMART" id="SM00841">
    <property type="entry name" value="Elong-fact-P_C"/>
    <property type="match status" value="1"/>
</dbReference>
<dbReference type="SUPFAM" id="SSF50249">
    <property type="entry name" value="Nucleic acid-binding proteins"/>
    <property type="match status" value="2"/>
</dbReference>
<dbReference type="SUPFAM" id="SSF50104">
    <property type="entry name" value="Translation proteins SH3-like domain"/>
    <property type="match status" value="1"/>
</dbReference>
<dbReference type="PROSITE" id="PS01275">
    <property type="entry name" value="EFP"/>
    <property type="match status" value="1"/>
</dbReference>
<accession>Q2GKG2</accession>
<proteinExistence type="inferred from homology"/>
<evidence type="ECO:0000255" key="1">
    <source>
        <dbReference type="HAMAP-Rule" id="MF_00141"/>
    </source>
</evidence>
<feature type="chain" id="PRO_1000010675" description="Elongation factor P">
    <location>
        <begin position="1"/>
        <end position="188"/>
    </location>
</feature>